<sequence>MQLLEERILTDGNILGENILKVDNFLTHQVDYRLMKAIGKVFAQKYAEAGITKVVTIEASGIAPAVYAAEAMDVPMIFAKKHKNITMTEGILTAEVYSFTKQVTSTVSIAGKFLSKEDKVLIIDDFLANGQAAKGLIEIIGQAGAQVVGVGIVIEKSFQDGRRLIEDMGIEVTSLARIKNFENGNLNFLEADA</sequence>
<organism>
    <name type="scientific">Streptococcus pyogenes serotype M18 (strain MGAS8232)</name>
    <dbReference type="NCBI Taxonomy" id="186103"/>
    <lineage>
        <taxon>Bacteria</taxon>
        <taxon>Bacillati</taxon>
        <taxon>Bacillota</taxon>
        <taxon>Bacilli</taxon>
        <taxon>Lactobacillales</taxon>
        <taxon>Streptococcaceae</taxon>
        <taxon>Streptococcus</taxon>
    </lineage>
</organism>
<proteinExistence type="inferred from homology"/>
<dbReference type="EC" id="2.4.2.22" evidence="1"/>
<dbReference type="EMBL" id="AE009949">
    <property type="protein sequence ID" value="AAL97718.1"/>
    <property type="molecule type" value="Genomic_DNA"/>
</dbReference>
<dbReference type="RefSeq" id="WP_002984677.1">
    <property type="nucleotide sequence ID" value="NC_003485.1"/>
</dbReference>
<dbReference type="SMR" id="Q7CN84"/>
<dbReference type="KEGG" id="spm:spyM18_1096"/>
<dbReference type="HOGENOM" id="CLU_099015_0_0_9"/>
<dbReference type="UniPathway" id="UPA00602">
    <property type="reaction ID" value="UER00658"/>
</dbReference>
<dbReference type="GO" id="GO:0005737">
    <property type="term" value="C:cytoplasm"/>
    <property type="evidence" value="ECO:0007669"/>
    <property type="project" value="UniProtKB-SubCell"/>
</dbReference>
<dbReference type="GO" id="GO:0000310">
    <property type="term" value="F:xanthine phosphoribosyltransferase activity"/>
    <property type="evidence" value="ECO:0007669"/>
    <property type="project" value="UniProtKB-UniRule"/>
</dbReference>
<dbReference type="GO" id="GO:0006166">
    <property type="term" value="P:purine ribonucleoside salvage"/>
    <property type="evidence" value="ECO:0007669"/>
    <property type="project" value="UniProtKB-KW"/>
</dbReference>
<dbReference type="GO" id="GO:0046110">
    <property type="term" value="P:xanthine metabolic process"/>
    <property type="evidence" value="ECO:0007669"/>
    <property type="project" value="InterPro"/>
</dbReference>
<dbReference type="GO" id="GO:0032265">
    <property type="term" value="P:XMP salvage"/>
    <property type="evidence" value="ECO:0007669"/>
    <property type="project" value="UniProtKB-UniRule"/>
</dbReference>
<dbReference type="CDD" id="cd06223">
    <property type="entry name" value="PRTases_typeI"/>
    <property type="match status" value="1"/>
</dbReference>
<dbReference type="Gene3D" id="3.40.50.2020">
    <property type="match status" value="1"/>
</dbReference>
<dbReference type="HAMAP" id="MF_01184">
    <property type="entry name" value="XPRTase"/>
    <property type="match status" value="1"/>
</dbReference>
<dbReference type="InterPro" id="IPR000836">
    <property type="entry name" value="PRibTrfase_dom"/>
</dbReference>
<dbReference type="InterPro" id="IPR029057">
    <property type="entry name" value="PRTase-like"/>
</dbReference>
<dbReference type="InterPro" id="IPR050118">
    <property type="entry name" value="Pur/Pyrimidine_PRTase"/>
</dbReference>
<dbReference type="InterPro" id="IPR010079">
    <property type="entry name" value="Xanthine_PRibTrfase"/>
</dbReference>
<dbReference type="NCBIfam" id="NF006671">
    <property type="entry name" value="PRK09219.1"/>
    <property type="match status" value="1"/>
</dbReference>
<dbReference type="NCBIfam" id="TIGR01744">
    <property type="entry name" value="XPRTase"/>
    <property type="match status" value="1"/>
</dbReference>
<dbReference type="PANTHER" id="PTHR43864">
    <property type="entry name" value="HYPOXANTHINE/GUANINE PHOSPHORIBOSYLTRANSFERASE"/>
    <property type="match status" value="1"/>
</dbReference>
<dbReference type="PANTHER" id="PTHR43864:SF1">
    <property type="entry name" value="XANTHINE PHOSPHORIBOSYLTRANSFERASE"/>
    <property type="match status" value="1"/>
</dbReference>
<dbReference type="Pfam" id="PF00156">
    <property type="entry name" value="Pribosyltran"/>
    <property type="match status" value="1"/>
</dbReference>
<dbReference type="SUPFAM" id="SSF53271">
    <property type="entry name" value="PRTase-like"/>
    <property type="match status" value="1"/>
</dbReference>
<protein>
    <recommendedName>
        <fullName evidence="1">Xanthine phosphoribosyltransferase</fullName>
        <shortName evidence="1">XPRTase</shortName>
        <ecNumber evidence="1">2.4.2.22</ecNumber>
    </recommendedName>
</protein>
<feature type="chain" id="PRO_0000339769" description="Xanthine phosphoribosyltransferase">
    <location>
        <begin position="1"/>
        <end position="193"/>
    </location>
</feature>
<feature type="binding site" evidence="1">
    <location>
        <position position="20"/>
    </location>
    <ligand>
        <name>xanthine</name>
        <dbReference type="ChEBI" id="CHEBI:17712"/>
    </ligand>
</feature>
<feature type="binding site" evidence="1">
    <location>
        <position position="27"/>
    </location>
    <ligand>
        <name>xanthine</name>
        <dbReference type="ChEBI" id="CHEBI:17712"/>
    </ligand>
</feature>
<feature type="binding site" evidence="1">
    <location>
        <begin position="128"/>
        <end position="132"/>
    </location>
    <ligand>
        <name>5-phospho-alpha-D-ribose 1-diphosphate</name>
        <dbReference type="ChEBI" id="CHEBI:58017"/>
    </ligand>
</feature>
<feature type="binding site" evidence="1">
    <location>
        <position position="156"/>
    </location>
    <ligand>
        <name>xanthine</name>
        <dbReference type="ChEBI" id="CHEBI:17712"/>
    </ligand>
</feature>
<gene>
    <name evidence="1" type="primary">xpt</name>
    <name type="ordered locus">spyM18_1096</name>
</gene>
<keyword id="KW-0963">Cytoplasm</keyword>
<keyword id="KW-0328">Glycosyltransferase</keyword>
<keyword id="KW-0660">Purine salvage</keyword>
<keyword id="KW-0808">Transferase</keyword>
<reference key="1">
    <citation type="journal article" date="2002" name="Proc. Natl. Acad. Sci. U.S.A.">
        <title>Genome sequence and comparative microarray analysis of serotype M18 group A Streptococcus strains associated with acute rheumatic fever outbreaks.</title>
        <authorList>
            <person name="Smoot J.C."/>
            <person name="Barbian K.D."/>
            <person name="Van Gompel J.J."/>
            <person name="Smoot L.M."/>
            <person name="Chaussee M.S."/>
            <person name="Sylva G.L."/>
            <person name="Sturdevant D.E."/>
            <person name="Ricklefs S.M."/>
            <person name="Porcella S.F."/>
            <person name="Parkins L.D."/>
            <person name="Beres S.B."/>
            <person name="Campbell D.S."/>
            <person name="Smith T.M."/>
            <person name="Zhang Q."/>
            <person name="Kapur V."/>
            <person name="Daly J.A."/>
            <person name="Veasy L.G."/>
            <person name="Musser J.M."/>
        </authorList>
    </citation>
    <scope>NUCLEOTIDE SEQUENCE [LARGE SCALE GENOMIC DNA]</scope>
    <source>
        <strain>MGAS8232</strain>
    </source>
</reference>
<name>XPT_STRP8</name>
<accession>Q7CN84</accession>
<comment type="function">
    <text evidence="1">Converts the preformed base xanthine, a product of nucleic acid breakdown, to xanthosine 5'-monophosphate (XMP), so it can be reused for RNA or DNA synthesis.</text>
</comment>
<comment type="catalytic activity">
    <reaction evidence="1">
        <text>XMP + diphosphate = xanthine + 5-phospho-alpha-D-ribose 1-diphosphate</text>
        <dbReference type="Rhea" id="RHEA:10800"/>
        <dbReference type="ChEBI" id="CHEBI:17712"/>
        <dbReference type="ChEBI" id="CHEBI:33019"/>
        <dbReference type="ChEBI" id="CHEBI:57464"/>
        <dbReference type="ChEBI" id="CHEBI:58017"/>
        <dbReference type="EC" id="2.4.2.22"/>
    </reaction>
</comment>
<comment type="pathway">
    <text evidence="1">Purine metabolism; XMP biosynthesis via salvage pathway; XMP from xanthine: step 1/1.</text>
</comment>
<comment type="subunit">
    <text evidence="1">Homodimer.</text>
</comment>
<comment type="subcellular location">
    <subcellularLocation>
        <location evidence="1">Cytoplasm</location>
    </subcellularLocation>
</comment>
<comment type="similarity">
    <text evidence="1">Belongs to the purine/pyrimidine phosphoribosyltransferase family. Xpt subfamily.</text>
</comment>
<evidence type="ECO:0000255" key="1">
    <source>
        <dbReference type="HAMAP-Rule" id="MF_01184"/>
    </source>
</evidence>